<dbReference type="EC" id="2.5.1.72" evidence="1"/>
<dbReference type="EMBL" id="AL157959">
    <property type="protein sequence ID" value="CAM09191.1"/>
    <property type="molecule type" value="Genomic_DNA"/>
</dbReference>
<dbReference type="PIR" id="C81780">
    <property type="entry name" value="C81780"/>
</dbReference>
<dbReference type="RefSeq" id="WP_002246781.1">
    <property type="nucleotide sequence ID" value="NC_003116.1"/>
</dbReference>
<dbReference type="SMR" id="Q9JSX6"/>
<dbReference type="EnsemblBacteria" id="CAM09191">
    <property type="protein sequence ID" value="CAM09191"/>
    <property type="gene ID" value="NMA2090"/>
</dbReference>
<dbReference type="KEGG" id="nma:NMA2090"/>
<dbReference type="HOGENOM" id="CLU_047382_1_0_4"/>
<dbReference type="UniPathway" id="UPA00253">
    <property type="reaction ID" value="UER00327"/>
</dbReference>
<dbReference type="Proteomes" id="UP000000626">
    <property type="component" value="Chromosome"/>
</dbReference>
<dbReference type="GO" id="GO:0005829">
    <property type="term" value="C:cytosol"/>
    <property type="evidence" value="ECO:0007669"/>
    <property type="project" value="TreeGrafter"/>
</dbReference>
<dbReference type="GO" id="GO:0051539">
    <property type="term" value="F:4 iron, 4 sulfur cluster binding"/>
    <property type="evidence" value="ECO:0007669"/>
    <property type="project" value="UniProtKB-KW"/>
</dbReference>
<dbReference type="GO" id="GO:0046872">
    <property type="term" value="F:metal ion binding"/>
    <property type="evidence" value="ECO:0007669"/>
    <property type="project" value="UniProtKB-KW"/>
</dbReference>
<dbReference type="GO" id="GO:0008987">
    <property type="term" value="F:quinolinate synthetase A activity"/>
    <property type="evidence" value="ECO:0007669"/>
    <property type="project" value="UniProtKB-UniRule"/>
</dbReference>
<dbReference type="GO" id="GO:0034628">
    <property type="term" value="P:'de novo' NAD biosynthetic process from L-aspartate"/>
    <property type="evidence" value="ECO:0007669"/>
    <property type="project" value="TreeGrafter"/>
</dbReference>
<dbReference type="FunFam" id="3.40.50.10800:FF:000001">
    <property type="entry name" value="Quinolinate synthase A"/>
    <property type="match status" value="1"/>
</dbReference>
<dbReference type="FunFam" id="3.40.50.10800:FF:000003">
    <property type="entry name" value="Quinolinate synthase A"/>
    <property type="match status" value="1"/>
</dbReference>
<dbReference type="Gene3D" id="3.40.50.10800">
    <property type="entry name" value="NadA-like"/>
    <property type="match status" value="3"/>
</dbReference>
<dbReference type="HAMAP" id="MF_00567">
    <property type="entry name" value="NadA_type1"/>
    <property type="match status" value="1"/>
</dbReference>
<dbReference type="InterPro" id="IPR003473">
    <property type="entry name" value="NadA"/>
</dbReference>
<dbReference type="InterPro" id="IPR036094">
    <property type="entry name" value="NadA_sf"/>
</dbReference>
<dbReference type="InterPro" id="IPR023513">
    <property type="entry name" value="Quinolinate_synth_A_type1"/>
</dbReference>
<dbReference type="NCBIfam" id="TIGR00550">
    <property type="entry name" value="nadA"/>
    <property type="match status" value="1"/>
</dbReference>
<dbReference type="NCBIfam" id="NF006877">
    <property type="entry name" value="PRK09375.1-1"/>
    <property type="match status" value="1"/>
</dbReference>
<dbReference type="NCBIfam" id="NF006878">
    <property type="entry name" value="PRK09375.1-2"/>
    <property type="match status" value="1"/>
</dbReference>
<dbReference type="PANTHER" id="PTHR30573:SF0">
    <property type="entry name" value="QUINOLINATE SYNTHASE, CHLOROPLASTIC"/>
    <property type="match status" value="1"/>
</dbReference>
<dbReference type="PANTHER" id="PTHR30573">
    <property type="entry name" value="QUINOLINATE SYNTHETASE A"/>
    <property type="match status" value="1"/>
</dbReference>
<dbReference type="Pfam" id="PF02445">
    <property type="entry name" value="NadA"/>
    <property type="match status" value="1"/>
</dbReference>
<dbReference type="SUPFAM" id="SSF142754">
    <property type="entry name" value="NadA-like"/>
    <property type="match status" value="1"/>
</dbReference>
<comment type="function">
    <text evidence="1">Catalyzes the condensation of iminoaspartate with dihydroxyacetone phosphate to form quinolinate.</text>
</comment>
<comment type="catalytic activity">
    <reaction evidence="1">
        <text>iminosuccinate + dihydroxyacetone phosphate = quinolinate + phosphate + 2 H2O + H(+)</text>
        <dbReference type="Rhea" id="RHEA:25888"/>
        <dbReference type="ChEBI" id="CHEBI:15377"/>
        <dbReference type="ChEBI" id="CHEBI:15378"/>
        <dbReference type="ChEBI" id="CHEBI:29959"/>
        <dbReference type="ChEBI" id="CHEBI:43474"/>
        <dbReference type="ChEBI" id="CHEBI:57642"/>
        <dbReference type="ChEBI" id="CHEBI:77875"/>
        <dbReference type="EC" id="2.5.1.72"/>
    </reaction>
    <physiologicalReaction direction="left-to-right" evidence="1">
        <dbReference type="Rhea" id="RHEA:25889"/>
    </physiologicalReaction>
</comment>
<comment type="cofactor">
    <cofactor evidence="1">
        <name>[4Fe-4S] cluster</name>
        <dbReference type="ChEBI" id="CHEBI:49883"/>
    </cofactor>
    <text evidence="1">Binds 1 [4Fe-4S] cluster per subunit.</text>
</comment>
<comment type="pathway">
    <text evidence="1">Cofactor biosynthesis; NAD(+) biosynthesis; quinolinate from iminoaspartate: step 1/1.</text>
</comment>
<comment type="subcellular location">
    <subcellularLocation>
        <location evidence="1">Cytoplasm</location>
    </subcellularLocation>
</comment>
<comment type="similarity">
    <text evidence="1">Belongs to the quinolinate synthase family. Type 1 subfamily.</text>
</comment>
<gene>
    <name evidence="1" type="primary">nadA</name>
    <name type="ordered locus">NMA2090</name>
</gene>
<keyword id="KW-0004">4Fe-4S</keyword>
<keyword id="KW-0963">Cytoplasm</keyword>
<keyword id="KW-0408">Iron</keyword>
<keyword id="KW-0411">Iron-sulfur</keyword>
<keyword id="KW-0479">Metal-binding</keyword>
<keyword id="KW-0662">Pyridine nucleotide biosynthesis</keyword>
<keyword id="KW-0808">Transferase</keyword>
<sequence length="370" mass="40110">MQTAARRSFDYDMPLIQTPTSACQIRQAWAKVADTPDRETADRLKDEIKALLKETNAVLVAHYYVDPLIQDLALETGGCVGDSLEMARFGAEHEAGTLVVAGVRFMGESAKILCPEKTVLMPDLEAECSLDLGCPEEAFSAFCDQHPDRTVVVYANTSAAVKARADWVVTSSVALEIVSYLKSRGEKLIWGPDRHLGDYICRETGADMLLWQGSCIVHNEFKGQELAALKAEHPDAVVLVHPESPQSVIELSDVVGSTSKLLKAAVSRPEKKFIVATDLGILHEMQKQAPDKQFIAAPTAGNGGSCKSCAFCPWMAMNSLGGIKYALTSGRNEILLDRKLGEAAKLPLQRMLDFAAGLKRGDVFNGMGPA</sequence>
<organism>
    <name type="scientific">Neisseria meningitidis serogroup A / serotype 4A (strain DSM 15465 / Z2491)</name>
    <dbReference type="NCBI Taxonomy" id="122587"/>
    <lineage>
        <taxon>Bacteria</taxon>
        <taxon>Pseudomonadati</taxon>
        <taxon>Pseudomonadota</taxon>
        <taxon>Betaproteobacteria</taxon>
        <taxon>Neisseriales</taxon>
        <taxon>Neisseriaceae</taxon>
        <taxon>Neisseria</taxon>
    </lineage>
</organism>
<protein>
    <recommendedName>
        <fullName evidence="1">Quinolinate synthase</fullName>
        <ecNumber evidence="1">2.5.1.72</ecNumber>
    </recommendedName>
</protein>
<proteinExistence type="inferred from homology"/>
<accession>Q9JSX6</accession>
<accession>A1ITS3</accession>
<feature type="chain" id="PRO_0000155763" description="Quinolinate synthase">
    <location>
        <begin position="1"/>
        <end position="370"/>
    </location>
</feature>
<feature type="binding site" evidence="1">
    <location>
        <position position="62"/>
    </location>
    <ligand>
        <name>iminosuccinate</name>
        <dbReference type="ChEBI" id="CHEBI:77875"/>
    </ligand>
</feature>
<feature type="binding site" evidence="1">
    <location>
        <position position="83"/>
    </location>
    <ligand>
        <name>iminosuccinate</name>
        <dbReference type="ChEBI" id="CHEBI:77875"/>
    </ligand>
</feature>
<feature type="binding site" evidence="1">
    <location>
        <position position="128"/>
    </location>
    <ligand>
        <name>[4Fe-4S] cluster</name>
        <dbReference type="ChEBI" id="CHEBI:49883"/>
    </ligand>
</feature>
<feature type="binding site" evidence="1">
    <location>
        <begin position="154"/>
        <end position="156"/>
    </location>
    <ligand>
        <name>iminosuccinate</name>
        <dbReference type="ChEBI" id="CHEBI:77875"/>
    </ligand>
</feature>
<feature type="binding site" evidence="1">
    <location>
        <position position="171"/>
    </location>
    <ligand>
        <name>iminosuccinate</name>
        <dbReference type="ChEBI" id="CHEBI:77875"/>
    </ligand>
</feature>
<feature type="binding site" evidence="1">
    <location>
        <position position="215"/>
    </location>
    <ligand>
        <name>[4Fe-4S] cluster</name>
        <dbReference type="ChEBI" id="CHEBI:49883"/>
    </ligand>
</feature>
<feature type="binding site" evidence="1">
    <location>
        <begin position="241"/>
        <end position="243"/>
    </location>
    <ligand>
        <name>iminosuccinate</name>
        <dbReference type="ChEBI" id="CHEBI:77875"/>
    </ligand>
</feature>
<feature type="binding site" evidence="1">
    <location>
        <position position="258"/>
    </location>
    <ligand>
        <name>iminosuccinate</name>
        <dbReference type="ChEBI" id="CHEBI:77875"/>
    </ligand>
</feature>
<feature type="binding site" evidence="1">
    <location>
        <position position="312"/>
    </location>
    <ligand>
        <name>[4Fe-4S] cluster</name>
        <dbReference type="ChEBI" id="CHEBI:49883"/>
    </ligand>
</feature>
<name>NADA_NEIMA</name>
<evidence type="ECO:0000255" key="1">
    <source>
        <dbReference type="HAMAP-Rule" id="MF_00567"/>
    </source>
</evidence>
<reference key="1">
    <citation type="journal article" date="2000" name="Nature">
        <title>Complete DNA sequence of a serogroup A strain of Neisseria meningitidis Z2491.</title>
        <authorList>
            <person name="Parkhill J."/>
            <person name="Achtman M."/>
            <person name="James K.D."/>
            <person name="Bentley S.D."/>
            <person name="Churcher C.M."/>
            <person name="Klee S.R."/>
            <person name="Morelli G."/>
            <person name="Basham D."/>
            <person name="Brown D."/>
            <person name="Chillingworth T."/>
            <person name="Davies R.M."/>
            <person name="Davis P."/>
            <person name="Devlin K."/>
            <person name="Feltwell T."/>
            <person name="Hamlin N."/>
            <person name="Holroyd S."/>
            <person name="Jagels K."/>
            <person name="Leather S."/>
            <person name="Moule S."/>
            <person name="Mungall K.L."/>
            <person name="Quail M.A."/>
            <person name="Rajandream M.A."/>
            <person name="Rutherford K.M."/>
            <person name="Simmonds M."/>
            <person name="Skelton J."/>
            <person name="Whitehead S."/>
            <person name="Spratt B.G."/>
            <person name="Barrell B.G."/>
        </authorList>
    </citation>
    <scope>NUCLEOTIDE SEQUENCE [LARGE SCALE GENOMIC DNA]</scope>
    <source>
        <strain>DSM 15465 / Z2491</strain>
    </source>
</reference>